<evidence type="ECO:0000250" key="1"/>
<evidence type="ECO:0000269" key="2">
    <source>
    </source>
</evidence>
<evidence type="ECO:0000305" key="3"/>
<reference key="1">
    <citation type="journal article" date="1996" name="Gene">
        <title>Three second chromosome-linked clustered Cyp6 genes show differential constitutive and barbital-induced expression in DDT-resistant and susceptible strains of Drosophila melanogaster.</title>
        <authorList>
            <person name="Maitra S."/>
            <person name="Dombrowski S.M."/>
            <person name="Waters L.C."/>
            <person name="Ganguly R."/>
        </authorList>
    </citation>
    <scope>NUCLEOTIDE SEQUENCE</scope>
    <scope>FUNCTION</scope>
    <source>
        <strain>91-R</strain>
    </source>
</reference>
<reference key="2">
    <citation type="journal article" date="2000" name="Science">
        <title>The genome sequence of Drosophila melanogaster.</title>
        <authorList>
            <person name="Adams M.D."/>
            <person name="Celniker S.E."/>
            <person name="Holt R.A."/>
            <person name="Evans C.A."/>
            <person name="Gocayne J.D."/>
            <person name="Amanatides P.G."/>
            <person name="Scherer S.E."/>
            <person name="Li P.W."/>
            <person name="Hoskins R.A."/>
            <person name="Galle R.F."/>
            <person name="George R.A."/>
            <person name="Lewis S.E."/>
            <person name="Richards S."/>
            <person name="Ashburner M."/>
            <person name="Henderson S.N."/>
            <person name="Sutton G.G."/>
            <person name="Wortman J.R."/>
            <person name="Yandell M.D."/>
            <person name="Zhang Q."/>
            <person name="Chen L.X."/>
            <person name="Brandon R.C."/>
            <person name="Rogers Y.-H.C."/>
            <person name="Blazej R.G."/>
            <person name="Champe M."/>
            <person name="Pfeiffer B.D."/>
            <person name="Wan K.H."/>
            <person name="Doyle C."/>
            <person name="Baxter E.G."/>
            <person name="Helt G."/>
            <person name="Nelson C.R."/>
            <person name="Miklos G.L.G."/>
            <person name="Abril J.F."/>
            <person name="Agbayani A."/>
            <person name="An H.-J."/>
            <person name="Andrews-Pfannkoch C."/>
            <person name="Baldwin D."/>
            <person name="Ballew R.M."/>
            <person name="Basu A."/>
            <person name="Baxendale J."/>
            <person name="Bayraktaroglu L."/>
            <person name="Beasley E.M."/>
            <person name="Beeson K.Y."/>
            <person name="Benos P.V."/>
            <person name="Berman B.P."/>
            <person name="Bhandari D."/>
            <person name="Bolshakov S."/>
            <person name="Borkova D."/>
            <person name="Botchan M.R."/>
            <person name="Bouck J."/>
            <person name="Brokstein P."/>
            <person name="Brottier P."/>
            <person name="Burtis K.C."/>
            <person name="Busam D.A."/>
            <person name="Butler H."/>
            <person name="Cadieu E."/>
            <person name="Center A."/>
            <person name="Chandra I."/>
            <person name="Cherry J.M."/>
            <person name="Cawley S."/>
            <person name="Dahlke C."/>
            <person name="Davenport L.B."/>
            <person name="Davies P."/>
            <person name="de Pablos B."/>
            <person name="Delcher A."/>
            <person name="Deng Z."/>
            <person name="Mays A.D."/>
            <person name="Dew I."/>
            <person name="Dietz S.M."/>
            <person name="Dodson K."/>
            <person name="Doup L.E."/>
            <person name="Downes M."/>
            <person name="Dugan-Rocha S."/>
            <person name="Dunkov B.C."/>
            <person name="Dunn P."/>
            <person name="Durbin K.J."/>
            <person name="Evangelista C.C."/>
            <person name="Ferraz C."/>
            <person name="Ferriera S."/>
            <person name="Fleischmann W."/>
            <person name="Fosler C."/>
            <person name="Gabrielian A.E."/>
            <person name="Garg N.S."/>
            <person name="Gelbart W.M."/>
            <person name="Glasser K."/>
            <person name="Glodek A."/>
            <person name="Gong F."/>
            <person name="Gorrell J.H."/>
            <person name="Gu Z."/>
            <person name="Guan P."/>
            <person name="Harris M."/>
            <person name="Harris N.L."/>
            <person name="Harvey D.A."/>
            <person name="Heiman T.J."/>
            <person name="Hernandez J.R."/>
            <person name="Houck J."/>
            <person name="Hostin D."/>
            <person name="Houston K.A."/>
            <person name="Howland T.J."/>
            <person name="Wei M.-H."/>
            <person name="Ibegwam C."/>
            <person name="Jalali M."/>
            <person name="Kalush F."/>
            <person name="Karpen G.H."/>
            <person name="Ke Z."/>
            <person name="Kennison J.A."/>
            <person name="Ketchum K.A."/>
            <person name="Kimmel B.E."/>
            <person name="Kodira C.D."/>
            <person name="Kraft C.L."/>
            <person name="Kravitz S."/>
            <person name="Kulp D."/>
            <person name="Lai Z."/>
            <person name="Lasko P."/>
            <person name="Lei Y."/>
            <person name="Levitsky A.A."/>
            <person name="Li J.H."/>
            <person name="Li Z."/>
            <person name="Liang Y."/>
            <person name="Lin X."/>
            <person name="Liu X."/>
            <person name="Mattei B."/>
            <person name="McIntosh T.C."/>
            <person name="McLeod M.P."/>
            <person name="McPherson D."/>
            <person name="Merkulov G."/>
            <person name="Milshina N.V."/>
            <person name="Mobarry C."/>
            <person name="Morris J."/>
            <person name="Moshrefi A."/>
            <person name="Mount S.M."/>
            <person name="Moy M."/>
            <person name="Murphy B."/>
            <person name="Murphy L."/>
            <person name="Muzny D.M."/>
            <person name="Nelson D.L."/>
            <person name="Nelson D.R."/>
            <person name="Nelson K.A."/>
            <person name="Nixon K."/>
            <person name="Nusskern D.R."/>
            <person name="Pacleb J.M."/>
            <person name="Palazzolo M."/>
            <person name="Pittman G.S."/>
            <person name="Pan S."/>
            <person name="Pollard J."/>
            <person name="Puri V."/>
            <person name="Reese M.G."/>
            <person name="Reinert K."/>
            <person name="Remington K."/>
            <person name="Saunders R.D.C."/>
            <person name="Scheeler F."/>
            <person name="Shen H."/>
            <person name="Shue B.C."/>
            <person name="Siden-Kiamos I."/>
            <person name="Simpson M."/>
            <person name="Skupski M.P."/>
            <person name="Smith T.J."/>
            <person name="Spier E."/>
            <person name="Spradling A.C."/>
            <person name="Stapleton M."/>
            <person name="Strong R."/>
            <person name="Sun E."/>
            <person name="Svirskas R."/>
            <person name="Tector C."/>
            <person name="Turner R."/>
            <person name="Venter E."/>
            <person name="Wang A.H."/>
            <person name="Wang X."/>
            <person name="Wang Z.-Y."/>
            <person name="Wassarman D.A."/>
            <person name="Weinstock G.M."/>
            <person name="Weissenbach J."/>
            <person name="Williams S.M."/>
            <person name="Woodage T."/>
            <person name="Worley K.C."/>
            <person name="Wu D."/>
            <person name="Yang S."/>
            <person name="Yao Q.A."/>
            <person name="Ye J."/>
            <person name="Yeh R.-F."/>
            <person name="Zaveri J.S."/>
            <person name="Zhan M."/>
            <person name="Zhang G."/>
            <person name="Zhao Q."/>
            <person name="Zheng L."/>
            <person name="Zheng X.H."/>
            <person name="Zhong F.N."/>
            <person name="Zhong W."/>
            <person name="Zhou X."/>
            <person name="Zhu S.C."/>
            <person name="Zhu X."/>
            <person name="Smith H.O."/>
            <person name="Gibbs R.A."/>
            <person name="Myers E.W."/>
            <person name="Rubin G.M."/>
            <person name="Venter J.C."/>
        </authorList>
    </citation>
    <scope>NUCLEOTIDE SEQUENCE [LARGE SCALE GENOMIC DNA]</scope>
    <source>
        <strain>Berkeley</strain>
    </source>
</reference>
<reference key="3">
    <citation type="journal article" date="2002" name="Genome Biol.">
        <title>Annotation of the Drosophila melanogaster euchromatic genome: a systematic review.</title>
        <authorList>
            <person name="Misra S."/>
            <person name="Crosby M.A."/>
            <person name="Mungall C.J."/>
            <person name="Matthews B.B."/>
            <person name="Campbell K.S."/>
            <person name="Hradecky P."/>
            <person name="Huang Y."/>
            <person name="Kaminker J.S."/>
            <person name="Millburn G.H."/>
            <person name="Prochnik S.E."/>
            <person name="Smith C.D."/>
            <person name="Tupy J.L."/>
            <person name="Whitfield E.J."/>
            <person name="Bayraktaroglu L."/>
            <person name="Berman B.P."/>
            <person name="Bettencourt B.R."/>
            <person name="Celniker S.E."/>
            <person name="de Grey A.D.N.J."/>
            <person name="Drysdale R.A."/>
            <person name="Harris N.L."/>
            <person name="Richter J."/>
            <person name="Russo S."/>
            <person name="Schroeder A.J."/>
            <person name="Shu S.Q."/>
            <person name="Stapleton M."/>
            <person name="Yamada C."/>
            <person name="Ashburner M."/>
            <person name="Gelbart W.M."/>
            <person name="Rubin G.M."/>
            <person name="Lewis S.E."/>
        </authorList>
    </citation>
    <scope>GENOME REANNOTATION</scope>
    <source>
        <strain>Berkeley</strain>
    </source>
</reference>
<name>CP6A8_DROME</name>
<sequence>MALTYILFQVAVALLAILTYYIHRKLTYFKRRGIPFVAPHLIRGNMEELQKTKNIHEIFQDHYNKFRESKAPFVGFFFFQSPAAFVIDLELAKQILIKDFSNFSNKGIFYNEKDDPISAHLFNLDGAQWRLLRNKLSSTFTSGKMKLMYPTVVSVANEFMTVMHEKVPKNSVLEIRDLVARFTVDVIGTCAFGIQCNSLRDEKAEFLYFGKRSLVDKRHGTLLNGFMRSYPKLARKLGMVRTAPHIQEFYSRIVTETVAVREKEHIKRNDFMDMLIELKNQKEMTLENGDVVRGLTMEEVLAQAFVFFIAGFETSSSTMGFALYELAKNPDIQDKVRAEVEEVIEQHDQNFTYECTKDLKYLNQVLDETLRLYTIVPNLDRMAAKRYVVPGHPNFVIEAGQSVIIPSSAIHHDPSIYPEPFEFRPERFSPEESAGRPSVAWLPFGDGPRNCIGLRFGQMQARIGLALLIRNFKFSTCSKTPNPLVYDPKSFVLGVKDGIYLKVETV</sequence>
<accession>Q27593</accession>
<accession>Q9V775</accession>
<organism>
    <name type="scientific">Drosophila melanogaster</name>
    <name type="common">Fruit fly</name>
    <dbReference type="NCBI Taxonomy" id="7227"/>
    <lineage>
        <taxon>Eukaryota</taxon>
        <taxon>Metazoa</taxon>
        <taxon>Ecdysozoa</taxon>
        <taxon>Arthropoda</taxon>
        <taxon>Hexapoda</taxon>
        <taxon>Insecta</taxon>
        <taxon>Pterygota</taxon>
        <taxon>Neoptera</taxon>
        <taxon>Endopterygota</taxon>
        <taxon>Diptera</taxon>
        <taxon>Brachycera</taxon>
        <taxon>Muscomorpha</taxon>
        <taxon>Ephydroidea</taxon>
        <taxon>Drosophilidae</taxon>
        <taxon>Drosophila</taxon>
        <taxon>Sophophora</taxon>
    </lineage>
</organism>
<comment type="function">
    <text evidence="2">Involved in the metabolism of insect hormones and in the breakdown of synthetic insecticides.</text>
</comment>
<comment type="cofactor">
    <cofactor evidence="1">
        <name>heme</name>
        <dbReference type="ChEBI" id="CHEBI:30413"/>
    </cofactor>
</comment>
<comment type="subcellular location">
    <subcellularLocation>
        <location evidence="3">Endoplasmic reticulum membrane</location>
        <topology evidence="3">Peripheral membrane protein</topology>
    </subcellularLocation>
    <subcellularLocation>
        <location evidence="3">Microsome membrane</location>
        <topology evidence="3">Peripheral membrane protein</topology>
    </subcellularLocation>
</comment>
<comment type="similarity">
    <text evidence="3">Belongs to the cytochrome P450 family.</text>
</comment>
<gene>
    <name type="primary">Cyp6a8</name>
    <name type="ORF">CG10248</name>
</gene>
<proteinExistence type="evidence at transcript level"/>
<dbReference type="EC" id="1.14.-.-"/>
<dbReference type="EMBL" id="L46859">
    <property type="protein sequence ID" value="AAB05550.1"/>
    <property type="molecule type" value="mRNA"/>
</dbReference>
<dbReference type="EMBL" id="AE013599">
    <property type="protein sequence ID" value="AAF58185.2"/>
    <property type="molecule type" value="Genomic_DNA"/>
</dbReference>
<dbReference type="PIR" id="JC5320">
    <property type="entry name" value="JC5320"/>
</dbReference>
<dbReference type="RefSeq" id="NP_523749.2">
    <property type="nucleotide sequence ID" value="NM_079025.5"/>
</dbReference>
<dbReference type="SMR" id="Q27593"/>
<dbReference type="BioGRID" id="62408">
    <property type="interactions" value="1"/>
</dbReference>
<dbReference type="FunCoup" id="Q27593">
    <property type="interactions" value="98"/>
</dbReference>
<dbReference type="STRING" id="7227.FBpp0086585"/>
<dbReference type="PaxDb" id="7227-FBpp0086585"/>
<dbReference type="DNASU" id="36666"/>
<dbReference type="EnsemblMetazoa" id="FBtr0087455">
    <property type="protein sequence ID" value="FBpp0086585"/>
    <property type="gene ID" value="FBgn0013772"/>
</dbReference>
<dbReference type="GeneID" id="36666"/>
<dbReference type="KEGG" id="dme:Dmel_CG10248"/>
<dbReference type="AGR" id="FB:FBgn0013772"/>
<dbReference type="CTD" id="36666"/>
<dbReference type="FlyBase" id="FBgn0013772">
    <property type="gene designation" value="Cyp6a8"/>
</dbReference>
<dbReference type="VEuPathDB" id="VectorBase:FBgn0013772"/>
<dbReference type="eggNOG" id="KOG0158">
    <property type="taxonomic scope" value="Eukaryota"/>
</dbReference>
<dbReference type="HOGENOM" id="CLU_001570_5_2_1"/>
<dbReference type="InParanoid" id="Q27593"/>
<dbReference type="OMA" id="NFTYECT"/>
<dbReference type="OrthoDB" id="2789670at2759"/>
<dbReference type="PhylomeDB" id="Q27593"/>
<dbReference type="BioGRID-ORCS" id="36666">
    <property type="hits" value="0 hits in 3 CRISPR screens"/>
</dbReference>
<dbReference type="GenomeRNAi" id="36666"/>
<dbReference type="PRO" id="PR:Q27593"/>
<dbReference type="Proteomes" id="UP000000803">
    <property type="component" value="Chromosome 2R"/>
</dbReference>
<dbReference type="Bgee" id="FBgn0013772">
    <property type="expression patterns" value="Expressed in epithelial cell in antenna and 75 other cell types or tissues"/>
</dbReference>
<dbReference type="ExpressionAtlas" id="Q27593">
    <property type="expression patterns" value="baseline and differential"/>
</dbReference>
<dbReference type="GO" id="GO:0012505">
    <property type="term" value="C:endomembrane system"/>
    <property type="evidence" value="ECO:0007005"/>
    <property type="project" value="FlyBase"/>
</dbReference>
<dbReference type="GO" id="GO:0005789">
    <property type="term" value="C:endoplasmic reticulum membrane"/>
    <property type="evidence" value="ECO:0007669"/>
    <property type="project" value="UniProtKB-SubCell"/>
</dbReference>
<dbReference type="GO" id="GO:0018685">
    <property type="term" value="F:alkane 1-monooxygenase activity"/>
    <property type="evidence" value="ECO:0000314"/>
    <property type="project" value="FlyBase"/>
</dbReference>
<dbReference type="GO" id="GO:0005504">
    <property type="term" value="F:fatty acid binding"/>
    <property type="evidence" value="ECO:0000314"/>
    <property type="project" value="FlyBase"/>
</dbReference>
<dbReference type="GO" id="GO:0020037">
    <property type="term" value="F:heme binding"/>
    <property type="evidence" value="ECO:0007669"/>
    <property type="project" value="InterPro"/>
</dbReference>
<dbReference type="GO" id="GO:0005506">
    <property type="term" value="F:iron ion binding"/>
    <property type="evidence" value="ECO:0007669"/>
    <property type="project" value="InterPro"/>
</dbReference>
<dbReference type="GO" id="GO:0120503">
    <property type="term" value="F:medium-chain fatty acid omega-1 hydroxylase activity"/>
    <property type="evidence" value="ECO:0000314"/>
    <property type="project" value="FlyBase"/>
</dbReference>
<dbReference type="GO" id="GO:0017143">
    <property type="term" value="P:insecticide metabolic process"/>
    <property type="evidence" value="ECO:0000314"/>
    <property type="project" value="FlyBase"/>
</dbReference>
<dbReference type="GO" id="GO:0048252">
    <property type="term" value="P:lauric acid metabolic process"/>
    <property type="evidence" value="ECO:0000314"/>
    <property type="project" value="FlyBase"/>
</dbReference>
<dbReference type="GO" id="GO:0031000">
    <property type="term" value="P:response to caffeine"/>
    <property type="evidence" value="ECO:0000314"/>
    <property type="project" value="FlyBase"/>
</dbReference>
<dbReference type="CDD" id="cd11056">
    <property type="entry name" value="CYP6-like"/>
    <property type="match status" value="1"/>
</dbReference>
<dbReference type="FunFam" id="1.10.630.10:FF:000042">
    <property type="entry name" value="Cytochrome P450"/>
    <property type="match status" value="1"/>
</dbReference>
<dbReference type="Gene3D" id="1.10.630.10">
    <property type="entry name" value="Cytochrome P450"/>
    <property type="match status" value="1"/>
</dbReference>
<dbReference type="InterPro" id="IPR001128">
    <property type="entry name" value="Cyt_P450"/>
</dbReference>
<dbReference type="InterPro" id="IPR017972">
    <property type="entry name" value="Cyt_P450_CS"/>
</dbReference>
<dbReference type="InterPro" id="IPR002401">
    <property type="entry name" value="Cyt_P450_E_grp-I"/>
</dbReference>
<dbReference type="InterPro" id="IPR036396">
    <property type="entry name" value="Cyt_P450_sf"/>
</dbReference>
<dbReference type="InterPro" id="IPR050476">
    <property type="entry name" value="Insect_CytP450_Detox"/>
</dbReference>
<dbReference type="PANTHER" id="PTHR24292">
    <property type="entry name" value="CYTOCHROME P450"/>
    <property type="match status" value="1"/>
</dbReference>
<dbReference type="PANTHER" id="PTHR24292:SF100">
    <property type="entry name" value="CYTOCHROME P450 6A16, ISOFORM B-RELATED"/>
    <property type="match status" value="1"/>
</dbReference>
<dbReference type="Pfam" id="PF00067">
    <property type="entry name" value="p450"/>
    <property type="match status" value="1"/>
</dbReference>
<dbReference type="PRINTS" id="PR00463">
    <property type="entry name" value="EP450I"/>
</dbReference>
<dbReference type="PRINTS" id="PR00385">
    <property type="entry name" value="P450"/>
</dbReference>
<dbReference type="SUPFAM" id="SSF48264">
    <property type="entry name" value="Cytochrome P450"/>
    <property type="match status" value="1"/>
</dbReference>
<dbReference type="PROSITE" id="PS00086">
    <property type="entry name" value="CYTOCHROME_P450"/>
    <property type="match status" value="1"/>
</dbReference>
<keyword id="KW-0256">Endoplasmic reticulum</keyword>
<keyword id="KW-0349">Heme</keyword>
<keyword id="KW-0408">Iron</keyword>
<keyword id="KW-0472">Membrane</keyword>
<keyword id="KW-0479">Metal-binding</keyword>
<keyword id="KW-0492">Microsome</keyword>
<keyword id="KW-0503">Monooxygenase</keyword>
<keyword id="KW-0560">Oxidoreductase</keyword>
<keyword id="KW-1185">Reference proteome</keyword>
<feature type="chain" id="PRO_0000051867" description="Cytochrome P450 6a8">
    <location>
        <begin position="1"/>
        <end position="506"/>
    </location>
</feature>
<feature type="binding site" description="axial binding residue" evidence="1">
    <location>
        <position position="451"/>
    </location>
    <ligand>
        <name>heme</name>
        <dbReference type="ChEBI" id="CHEBI:30413"/>
    </ligand>
    <ligandPart>
        <name>Fe</name>
        <dbReference type="ChEBI" id="CHEBI:18248"/>
    </ligandPart>
</feature>
<feature type="sequence conflict" description="In Ref. 1; AAB05550." evidence="3" ref="1">
    <original>T</original>
    <variation>A</variation>
    <location>
        <position position="4"/>
    </location>
</feature>
<feature type="sequence conflict" description="In Ref. 1; AAB05550." evidence="3" ref="1">
    <original>G</original>
    <variation>A</variation>
    <location>
        <position position="193"/>
    </location>
</feature>
<feature type="sequence conflict" description="In Ref. 1; AAB05550." evidence="3" ref="1">
    <location>
        <begin position="332"/>
        <end position="343"/>
    </location>
</feature>
<feature type="sequence conflict" description="In Ref. 1; AAB05550." evidence="3" ref="1">
    <original>L</original>
    <variation>P</variation>
    <location>
        <position position="465"/>
    </location>
</feature>
<protein>
    <recommendedName>
        <fullName>Cytochrome P450 6a8</fullName>
        <ecNumber>1.14.-.-</ecNumber>
    </recommendedName>
    <alternativeName>
        <fullName>CYPVIA8</fullName>
    </alternativeName>
</protein>